<name>PPR17_MOUSE</name>
<organism>
    <name type="scientific">Mus musculus</name>
    <name type="common">Mouse</name>
    <dbReference type="NCBI Taxonomy" id="10090"/>
    <lineage>
        <taxon>Eukaryota</taxon>
        <taxon>Metazoa</taxon>
        <taxon>Chordata</taxon>
        <taxon>Craniata</taxon>
        <taxon>Vertebrata</taxon>
        <taxon>Euteleostomi</taxon>
        <taxon>Mammalia</taxon>
        <taxon>Eutheria</taxon>
        <taxon>Euarchontoglires</taxon>
        <taxon>Glires</taxon>
        <taxon>Rodentia</taxon>
        <taxon>Myomorpha</taxon>
        <taxon>Muroidea</taxon>
        <taxon>Muridae</taxon>
        <taxon>Murinae</taxon>
        <taxon>Mus</taxon>
        <taxon>Mus</taxon>
    </lineage>
</organism>
<accession>Q9Z2E4</accession>
<dbReference type="EMBL" id="AF071562">
    <property type="protein sequence ID" value="AAD12589.1"/>
    <property type="molecule type" value="mRNA"/>
</dbReference>
<dbReference type="EMBL" id="AF500906">
    <property type="protein sequence ID" value="AAM21706.1"/>
    <property type="molecule type" value="mRNA"/>
</dbReference>
<dbReference type="EMBL" id="AK078335">
    <property type="protein sequence ID" value="BAC37224.1"/>
    <property type="molecule type" value="mRNA"/>
</dbReference>
<dbReference type="EMBL" id="AC079365">
    <property type="status" value="NOT_ANNOTATED_CDS"/>
    <property type="molecule type" value="Genomic_DNA"/>
</dbReference>
<dbReference type="EMBL" id="CH466597">
    <property type="protein sequence ID" value="EDK98736.1"/>
    <property type="molecule type" value="Genomic_DNA"/>
</dbReference>
<dbReference type="EMBL" id="BC026822">
    <property type="protein sequence ID" value="AAH26822.1"/>
    <property type="molecule type" value="mRNA"/>
</dbReference>
<dbReference type="CCDS" id="CCDS20169.1"/>
<dbReference type="RefSeq" id="NP_035283.1">
    <property type="nucleotide sequence ID" value="NM_011153.4"/>
</dbReference>
<dbReference type="BioGRID" id="202340">
    <property type="interactions" value="1"/>
</dbReference>
<dbReference type="FunCoup" id="Q9Z2E4">
    <property type="interactions" value="240"/>
</dbReference>
<dbReference type="STRING" id="10090.ENSMUSP00000059708"/>
<dbReference type="iPTMnet" id="Q9Z2E4"/>
<dbReference type="PhosphoSitePlus" id="Q9Z2E4"/>
<dbReference type="PaxDb" id="10090-ENSMUSP00000059708"/>
<dbReference type="PeptideAtlas" id="Q9Z2E4"/>
<dbReference type="ProteomicsDB" id="289383"/>
<dbReference type="Antibodypedia" id="26306">
    <property type="antibodies" value="149 antibodies from 15 providers"/>
</dbReference>
<dbReference type="DNASU" id="19051"/>
<dbReference type="Ensembl" id="ENSMUST00000052827.6">
    <property type="protein sequence ID" value="ENSMUSP00000059708.5"/>
    <property type="gene ID" value="ENSMUSG00000002930.7"/>
</dbReference>
<dbReference type="GeneID" id="19051"/>
<dbReference type="KEGG" id="mmu:19051"/>
<dbReference type="UCSC" id="uc009cay.1">
    <property type="organism name" value="mouse"/>
</dbReference>
<dbReference type="AGR" id="MGI:1333876"/>
<dbReference type="CTD" id="10842"/>
<dbReference type="MGI" id="MGI:1333876">
    <property type="gene designation" value="Ppp1r17"/>
</dbReference>
<dbReference type="VEuPathDB" id="HostDB:ENSMUSG00000002930"/>
<dbReference type="eggNOG" id="ENOG502S50G">
    <property type="taxonomic scope" value="Eukaryota"/>
</dbReference>
<dbReference type="GeneTree" id="ENSGT00390000005586"/>
<dbReference type="HOGENOM" id="CLU_113768_0_0_1"/>
<dbReference type="InParanoid" id="Q9Z2E4"/>
<dbReference type="OMA" id="LDPRCGH"/>
<dbReference type="OrthoDB" id="9877987at2759"/>
<dbReference type="PhylomeDB" id="Q9Z2E4"/>
<dbReference type="TreeFam" id="TF335928"/>
<dbReference type="BioGRID-ORCS" id="19051">
    <property type="hits" value="1 hit in 76 CRISPR screens"/>
</dbReference>
<dbReference type="ChiTaRS" id="Ppp1r17">
    <property type="organism name" value="mouse"/>
</dbReference>
<dbReference type="PRO" id="PR:Q9Z2E4"/>
<dbReference type="Proteomes" id="UP000000589">
    <property type="component" value="Chromosome 6"/>
</dbReference>
<dbReference type="RNAct" id="Q9Z2E4">
    <property type="molecule type" value="protein"/>
</dbReference>
<dbReference type="Bgee" id="ENSMUSG00000002930">
    <property type="expression patterns" value="Expressed in cerebellum lobe and 80 other cell types or tissues"/>
</dbReference>
<dbReference type="GO" id="GO:0005829">
    <property type="term" value="C:cytosol"/>
    <property type="evidence" value="ECO:0000304"/>
    <property type="project" value="MGI"/>
</dbReference>
<dbReference type="GO" id="GO:0004864">
    <property type="term" value="F:protein phosphatase inhibitor activity"/>
    <property type="evidence" value="ECO:0000314"/>
    <property type="project" value="MGI"/>
</dbReference>
<dbReference type="GO" id="GO:0004865">
    <property type="term" value="F:protein serine/threonine phosphatase inhibitor activity"/>
    <property type="evidence" value="ECO:0000314"/>
    <property type="project" value="MGI"/>
</dbReference>
<dbReference type="GO" id="GO:0010921">
    <property type="term" value="P:regulation of phosphatase activity"/>
    <property type="evidence" value="ECO:0000314"/>
    <property type="project" value="UniProtKB"/>
</dbReference>
<dbReference type="InterPro" id="IPR033242">
    <property type="entry name" value="PPP1R17"/>
</dbReference>
<dbReference type="PANTHER" id="PTHR15387">
    <property type="entry name" value="PROTEIN PHOSPHATASE 1 REGULATORY SUBUNIT 17"/>
    <property type="match status" value="1"/>
</dbReference>
<dbReference type="PANTHER" id="PTHR15387:SF0">
    <property type="entry name" value="PROTEIN PHOSPHATASE 1 REGULATORY SUBUNIT 17"/>
    <property type="match status" value="1"/>
</dbReference>
<sequence length="159" mass="17815">MSTEMMTTEPVPPLELSDDILGKLDPQCSPSDDLSDQFIKDCDLKKKPRKGKNVQATLNVESDQKKPRRKDTPAVHIPPFIPGVISEHLIKRYDVQERIPKAKSGPALHNSDMEQKRPRRKDTPALHMPPFVAGLTLLRDESAGVILEDEEMDGDKLAI</sequence>
<keyword id="KW-0597">Phosphoprotein</keyword>
<keyword id="KW-0650">Protein phosphatase inhibitor</keyword>
<keyword id="KW-1185">Reference proteome</keyword>
<proteinExistence type="evidence at protein level"/>
<evidence type="ECO:0000250" key="1"/>
<evidence type="ECO:0000256" key="2">
    <source>
        <dbReference type="SAM" id="MobiDB-lite"/>
    </source>
</evidence>
<evidence type="ECO:0000269" key="3">
    <source>
    </source>
</evidence>
<protein>
    <recommendedName>
        <fullName>Protein phosphatase 1 regulatory subunit 17</fullName>
    </recommendedName>
    <alternativeName>
        <fullName>G substrate</fullName>
    </alternativeName>
</protein>
<feature type="chain" id="PRO_0000414576" description="Protein phosphatase 1 regulatory subunit 17">
    <location>
        <begin position="1"/>
        <end position="159"/>
    </location>
</feature>
<feature type="region of interest" description="Disordered" evidence="2">
    <location>
        <begin position="1"/>
        <end position="79"/>
    </location>
</feature>
<feature type="region of interest" description="Disordered" evidence="2">
    <location>
        <begin position="98"/>
        <end position="127"/>
    </location>
</feature>
<feature type="compositionally biased region" description="Basic and acidic residues" evidence="2">
    <location>
        <begin position="62"/>
        <end position="73"/>
    </location>
</feature>
<feature type="compositionally biased region" description="Basic and acidic residues" evidence="2">
    <location>
        <begin position="111"/>
        <end position="124"/>
    </location>
</feature>
<feature type="modified residue" description="Phosphothreonine; by PKG/PRKG1" evidence="3">
    <location>
        <position position="72"/>
    </location>
</feature>
<feature type="modified residue" description="Phosphothreonine; by PKG/PRKG1" evidence="3">
    <location>
        <position position="123"/>
    </location>
</feature>
<feature type="mutagenesis site" description="Does not potentiate the phosphorylation of the CREB transcription factor; when associated with A-123." evidence="3">
    <original>T</original>
    <variation>A</variation>
    <location>
        <position position="72"/>
    </location>
</feature>
<feature type="mutagenesis site" description="Does not potentiate the phosphorylation of the CREB transcription factor; when associated with A-72." evidence="3">
    <original>T</original>
    <variation>A</variation>
    <location>
        <position position="123"/>
    </location>
</feature>
<reference key="1">
    <citation type="journal article" date="1999" name="J. Biol. Chem.">
        <title>Phosphorylation-dependent inhibition of protein phosphatase-1 by G-substrate: a Purkinje cell substrate of the cyclic GMP-dependent protein kinase.</title>
        <authorList>
            <person name="Hall K.U."/>
            <person name="Collins S.P."/>
            <person name="Gamm D.M."/>
            <person name="Massa E."/>
            <person name="Depaoli-Roach A.A."/>
            <person name="Uhler M.D."/>
        </authorList>
    </citation>
    <scope>NUCLEOTIDE SEQUENCE [MRNA]</scope>
    <scope>FUNCTION</scope>
    <scope>PHOSPHORYLATION AT THR-72 AND THR-123</scope>
    <scope>MUTAGENESIS OF THR-72 AND THR-123</scope>
    <scope>TISSUE SPECIFICITY</scope>
    <source>
        <tissue>Brain</tissue>
    </source>
</reference>
<reference key="2">
    <citation type="journal article" date="2002" name="Exp. Gerontol.">
        <title>Five age-dependently expressed genes in mouse brain revealed by the fluorescence differential display-PCR technique.</title>
        <authorList>
            <person name="Iida R."/>
            <person name="Yasuda T."/>
            <person name="Tsubota E."/>
            <person name="Takatsuka H."/>
            <person name="Masuyama M."/>
            <person name="Matsuki T."/>
            <person name="Kishi K."/>
        </authorList>
    </citation>
    <scope>NUCLEOTIDE SEQUENCE [MRNA]</scope>
    <source>
        <strain>C57BL/6J</strain>
    </source>
</reference>
<reference key="3">
    <citation type="journal article" date="2005" name="Science">
        <title>The transcriptional landscape of the mammalian genome.</title>
        <authorList>
            <person name="Carninci P."/>
            <person name="Kasukawa T."/>
            <person name="Katayama S."/>
            <person name="Gough J."/>
            <person name="Frith M.C."/>
            <person name="Maeda N."/>
            <person name="Oyama R."/>
            <person name="Ravasi T."/>
            <person name="Lenhard B."/>
            <person name="Wells C."/>
            <person name="Kodzius R."/>
            <person name="Shimokawa K."/>
            <person name="Bajic V.B."/>
            <person name="Brenner S.E."/>
            <person name="Batalov S."/>
            <person name="Forrest A.R."/>
            <person name="Zavolan M."/>
            <person name="Davis M.J."/>
            <person name="Wilming L.G."/>
            <person name="Aidinis V."/>
            <person name="Allen J.E."/>
            <person name="Ambesi-Impiombato A."/>
            <person name="Apweiler R."/>
            <person name="Aturaliya R.N."/>
            <person name="Bailey T.L."/>
            <person name="Bansal M."/>
            <person name="Baxter L."/>
            <person name="Beisel K.W."/>
            <person name="Bersano T."/>
            <person name="Bono H."/>
            <person name="Chalk A.M."/>
            <person name="Chiu K.P."/>
            <person name="Choudhary V."/>
            <person name="Christoffels A."/>
            <person name="Clutterbuck D.R."/>
            <person name="Crowe M.L."/>
            <person name="Dalla E."/>
            <person name="Dalrymple B.P."/>
            <person name="de Bono B."/>
            <person name="Della Gatta G."/>
            <person name="di Bernardo D."/>
            <person name="Down T."/>
            <person name="Engstrom P."/>
            <person name="Fagiolini M."/>
            <person name="Faulkner G."/>
            <person name="Fletcher C.F."/>
            <person name="Fukushima T."/>
            <person name="Furuno M."/>
            <person name="Futaki S."/>
            <person name="Gariboldi M."/>
            <person name="Georgii-Hemming P."/>
            <person name="Gingeras T.R."/>
            <person name="Gojobori T."/>
            <person name="Green R.E."/>
            <person name="Gustincich S."/>
            <person name="Harbers M."/>
            <person name="Hayashi Y."/>
            <person name="Hensch T.K."/>
            <person name="Hirokawa N."/>
            <person name="Hill D."/>
            <person name="Huminiecki L."/>
            <person name="Iacono M."/>
            <person name="Ikeo K."/>
            <person name="Iwama A."/>
            <person name="Ishikawa T."/>
            <person name="Jakt M."/>
            <person name="Kanapin A."/>
            <person name="Katoh M."/>
            <person name="Kawasawa Y."/>
            <person name="Kelso J."/>
            <person name="Kitamura H."/>
            <person name="Kitano H."/>
            <person name="Kollias G."/>
            <person name="Krishnan S.P."/>
            <person name="Kruger A."/>
            <person name="Kummerfeld S.K."/>
            <person name="Kurochkin I.V."/>
            <person name="Lareau L.F."/>
            <person name="Lazarevic D."/>
            <person name="Lipovich L."/>
            <person name="Liu J."/>
            <person name="Liuni S."/>
            <person name="McWilliam S."/>
            <person name="Madan Babu M."/>
            <person name="Madera M."/>
            <person name="Marchionni L."/>
            <person name="Matsuda H."/>
            <person name="Matsuzawa S."/>
            <person name="Miki H."/>
            <person name="Mignone F."/>
            <person name="Miyake S."/>
            <person name="Morris K."/>
            <person name="Mottagui-Tabar S."/>
            <person name="Mulder N."/>
            <person name="Nakano N."/>
            <person name="Nakauchi H."/>
            <person name="Ng P."/>
            <person name="Nilsson R."/>
            <person name="Nishiguchi S."/>
            <person name="Nishikawa S."/>
            <person name="Nori F."/>
            <person name="Ohara O."/>
            <person name="Okazaki Y."/>
            <person name="Orlando V."/>
            <person name="Pang K.C."/>
            <person name="Pavan W.J."/>
            <person name="Pavesi G."/>
            <person name="Pesole G."/>
            <person name="Petrovsky N."/>
            <person name="Piazza S."/>
            <person name="Reed J."/>
            <person name="Reid J.F."/>
            <person name="Ring B.Z."/>
            <person name="Ringwald M."/>
            <person name="Rost B."/>
            <person name="Ruan Y."/>
            <person name="Salzberg S.L."/>
            <person name="Sandelin A."/>
            <person name="Schneider C."/>
            <person name="Schoenbach C."/>
            <person name="Sekiguchi K."/>
            <person name="Semple C.A."/>
            <person name="Seno S."/>
            <person name="Sessa L."/>
            <person name="Sheng Y."/>
            <person name="Shibata Y."/>
            <person name="Shimada H."/>
            <person name="Shimada K."/>
            <person name="Silva D."/>
            <person name="Sinclair B."/>
            <person name="Sperling S."/>
            <person name="Stupka E."/>
            <person name="Sugiura K."/>
            <person name="Sultana R."/>
            <person name="Takenaka Y."/>
            <person name="Taki K."/>
            <person name="Tammoja K."/>
            <person name="Tan S.L."/>
            <person name="Tang S."/>
            <person name="Taylor M.S."/>
            <person name="Tegner J."/>
            <person name="Teichmann S.A."/>
            <person name="Ueda H.R."/>
            <person name="van Nimwegen E."/>
            <person name="Verardo R."/>
            <person name="Wei C.L."/>
            <person name="Yagi K."/>
            <person name="Yamanishi H."/>
            <person name="Zabarovsky E."/>
            <person name="Zhu S."/>
            <person name="Zimmer A."/>
            <person name="Hide W."/>
            <person name="Bult C."/>
            <person name="Grimmond S.M."/>
            <person name="Teasdale R.D."/>
            <person name="Liu E.T."/>
            <person name="Brusic V."/>
            <person name="Quackenbush J."/>
            <person name="Wahlestedt C."/>
            <person name="Mattick J.S."/>
            <person name="Hume D.A."/>
            <person name="Kai C."/>
            <person name="Sasaki D."/>
            <person name="Tomaru Y."/>
            <person name="Fukuda S."/>
            <person name="Kanamori-Katayama M."/>
            <person name="Suzuki M."/>
            <person name="Aoki J."/>
            <person name="Arakawa T."/>
            <person name="Iida J."/>
            <person name="Imamura K."/>
            <person name="Itoh M."/>
            <person name="Kato T."/>
            <person name="Kawaji H."/>
            <person name="Kawagashira N."/>
            <person name="Kawashima T."/>
            <person name="Kojima M."/>
            <person name="Kondo S."/>
            <person name="Konno H."/>
            <person name="Nakano K."/>
            <person name="Ninomiya N."/>
            <person name="Nishio T."/>
            <person name="Okada M."/>
            <person name="Plessy C."/>
            <person name="Shibata K."/>
            <person name="Shiraki T."/>
            <person name="Suzuki S."/>
            <person name="Tagami M."/>
            <person name="Waki K."/>
            <person name="Watahiki A."/>
            <person name="Okamura-Oho Y."/>
            <person name="Suzuki H."/>
            <person name="Kawai J."/>
            <person name="Hayashizaki Y."/>
        </authorList>
    </citation>
    <scope>NUCLEOTIDE SEQUENCE [LARGE SCALE MRNA]</scope>
    <source>
        <strain>C57BL/6J</strain>
        <tissue>Cerebellum</tissue>
    </source>
</reference>
<reference key="4">
    <citation type="journal article" date="2009" name="PLoS Biol.">
        <title>Lineage-specific biology revealed by a finished genome assembly of the mouse.</title>
        <authorList>
            <person name="Church D.M."/>
            <person name="Goodstadt L."/>
            <person name="Hillier L.W."/>
            <person name="Zody M.C."/>
            <person name="Goldstein S."/>
            <person name="She X."/>
            <person name="Bult C.J."/>
            <person name="Agarwala R."/>
            <person name="Cherry J.L."/>
            <person name="DiCuccio M."/>
            <person name="Hlavina W."/>
            <person name="Kapustin Y."/>
            <person name="Meric P."/>
            <person name="Maglott D."/>
            <person name="Birtle Z."/>
            <person name="Marques A.C."/>
            <person name="Graves T."/>
            <person name="Zhou S."/>
            <person name="Teague B."/>
            <person name="Potamousis K."/>
            <person name="Churas C."/>
            <person name="Place M."/>
            <person name="Herschleb J."/>
            <person name="Runnheim R."/>
            <person name="Forrest D."/>
            <person name="Amos-Landgraf J."/>
            <person name="Schwartz D.C."/>
            <person name="Cheng Z."/>
            <person name="Lindblad-Toh K."/>
            <person name="Eichler E.E."/>
            <person name="Ponting C.P."/>
        </authorList>
    </citation>
    <scope>NUCLEOTIDE SEQUENCE [LARGE SCALE GENOMIC DNA]</scope>
    <source>
        <strain>C57BL/6J</strain>
    </source>
</reference>
<reference key="5">
    <citation type="submission" date="2005-07" db="EMBL/GenBank/DDBJ databases">
        <authorList>
            <person name="Mural R.J."/>
            <person name="Adams M.D."/>
            <person name="Myers E.W."/>
            <person name="Smith H.O."/>
            <person name="Venter J.C."/>
        </authorList>
    </citation>
    <scope>NUCLEOTIDE SEQUENCE [LARGE SCALE GENOMIC DNA]</scope>
</reference>
<reference key="6">
    <citation type="journal article" date="2004" name="Genome Res.">
        <title>The status, quality, and expansion of the NIH full-length cDNA project: the Mammalian Gene Collection (MGC).</title>
        <authorList>
            <consortium name="The MGC Project Team"/>
        </authorList>
    </citation>
    <scope>NUCLEOTIDE SEQUENCE [LARGE SCALE MRNA]</scope>
    <source>
        <tissue>Eye</tissue>
    </source>
</reference>
<reference key="7">
    <citation type="journal article" date="2010" name="Cell">
        <title>A tissue-specific atlas of mouse protein phosphorylation and expression.</title>
        <authorList>
            <person name="Huttlin E.L."/>
            <person name="Jedrychowski M.P."/>
            <person name="Elias J.E."/>
            <person name="Goswami T."/>
            <person name="Rad R."/>
            <person name="Beausoleil S.A."/>
            <person name="Villen J."/>
            <person name="Haas W."/>
            <person name="Sowa M.E."/>
            <person name="Gygi S.P."/>
        </authorList>
    </citation>
    <scope>IDENTIFICATION BY MASS SPECTROMETRY [LARGE SCALE ANALYSIS]</scope>
    <source>
        <tissue>Brain</tissue>
    </source>
</reference>
<comment type="function">
    <text evidence="3">Inhibits phosphatase activities of protein phosphatase 1 (PP1) and protein phosphatase 2A (PP2A) complexes.</text>
</comment>
<comment type="tissue specificity">
    <text evidence="3">Expressed in Purkinje cells of the cerebellum, hippocampus, pons, medulla and eye.</text>
</comment>
<comment type="PTM">
    <text evidence="1 3">Substrate for cGMP-dependent protein kinase (By similarity). Phosphorylation of Thr-72 and Thr-123 is required for its phosphatase activity. Phosphorylated by PRKG1 isoform alpha.</text>
</comment>
<gene>
    <name type="primary">Ppp1r17</name>
    <name type="synonym">Gsbs</name>
</gene>